<keyword id="KW-0687">Ribonucleoprotein</keyword>
<keyword id="KW-0689">Ribosomal protein</keyword>
<keyword id="KW-0694">RNA-binding</keyword>
<keyword id="KW-0699">rRNA-binding</keyword>
<gene>
    <name evidence="1" type="primary">rpsF</name>
    <name type="ordered locus">RPA3077</name>
</gene>
<evidence type="ECO:0000255" key="1">
    <source>
        <dbReference type="HAMAP-Rule" id="MF_00360"/>
    </source>
</evidence>
<evidence type="ECO:0000256" key="2">
    <source>
        <dbReference type="SAM" id="MobiDB-lite"/>
    </source>
</evidence>
<evidence type="ECO:0000305" key="3"/>
<sequence length="158" mass="17932">MPLYEHVFLARQDASAQQVEELTTQITGVIEGLGGKVTKTESWGLRSLTYRMNKNRKAHFVLLNIDGPAAVVSEIERQERINEDVIRYLTVRVDEHEEGPSAMMRKADRDRERDDRGPREGGFRGDREGRGDRDGFRGDRGPRRPREDADAPAAAVEE</sequence>
<accession>Q6N5A4</accession>
<comment type="function">
    <text evidence="1">Binds together with bS18 to 16S ribosomal RNA.</text>
</comment>
<comment type="miscellaneous">
    <text>The initiator methionine may be removed.</text>
</comment>
<comment type="similarity">
    <text evidence="1">Belongs to the bacterial ribosomal protein bS6 family.</text>
</comment>
<reference key="1">
    <citation type="journal article" date="2004" name="Nat. Biotechnol.">
        <title>Complete genome sequence of the metabolically versatile photosynthetic bacterium Rhodopseudomonas palustris.</title>
        <authorList>
            <person name="Larimer F.W."/>
            <person name="Chain P."/>
            <person name="Hauser L."/>
            <person name="Lamerdin J.E."/>
            <person name="Malfatti S."/>
            <person name="Do L."/>
            <person name="Land M.L."/>
            <person name="Pelletier D.A."/>
            <person name="Beatty J.T."/>
            <person name="Lang A.S."/>
            <person name="Tabita F.R."/>
            <person name="Gibson J.L."/>
            <person name="Hanson T.E."/>
            <person name="Bobst C."/>
            <person name="Torres y Torres J.L."/>
            <person name="Peres C."/>
            <person name="Harrison F.H."/>
            <person name="Gibson J."/>
            <person name="Harwood C.S."/>
        </authorList>
    </citation>
    <scope>NUCLEOTIDE SEQUENCE [LARGE SCALE GENOMIC DNA]</scope>
    <source>
        <strain>ATCC BAA-98 / CGA009</strain>
    </source>
</reference>
<reference key="2">
    <citation type="journal article" date="2004" name="J. Proteome Res.">
        <title>Characterization of the 70S ribosome from Rhodopseudomonas palustris using an integrated 'top-down' and 'bottom-up' mass spectrometric approach.</title>
        <authorList>
            <person name="Strader M.B."/>
            <person name="VerBerkmoes N.C."/>
            <person name="Tabb D.L."/>
            <person name="Connelly H.M."/>
            <person name="Barton J.W."/>
            <person name="Bruce B.D."/>
            <person name="Pelletier D.A."/>
            <person name="Davison B.H."/>
            <person name="Hettich R.L."/>
            <person name="Larimer F.W."/>
            <person name="Hurst G.B."/>
        </authorList>
    </citation>
    <scope>IDENTIFICATION BY MASS SPECTROMETRY</scope>
    <source>
        <strain>ATCC BAA-98 / CGA009</strain>
    </source>
</reference>
<name>RS6_RHOPA</name>
<dbReference type="EMBL" id="BX572602">
    <property type="protein sequence ID" value="CAE28518.1"/>
    <property type="molecule type" value="Genomic_DNA"/>
</dbReference>
<dbReference type="RefSeq" id="WP_011158622.1">
    <property type="nucleotide sequence ID" value="NZ_CP116810.1"/>
</dbReference>
<dbReference type="SMR" id="Q6N5A4"/>
<dbReference type="IntAct" id="Q6N5A4">
    <property type="interactions" value="1"/>
</dbReference>
<dbReference type="STRING" id="258594.RPA3077"/>
<dbReference type="GeneID" id="66894159"/>
<dbReference type="eggNOG" id="COG0360">
    <property type="taxonomic scope" value="Bacteria"/>
</dbReference>
<dbReference type="HOGENOM" id="CLU_113441_2_0_5"/>
<dbReference type="PhylomeDB" id="Q6N5A4"/>
<dbReference type="GO" id="GO:0022627">
    <property type="term" value="C:cytosolic small ribosomal subunit"/>
    <property type="evidence" value="ECO:0007669"/>
    <property type="project" value="TreeGrafter"/>
</dbReference>
<dbReference type="GO" id="GO:0070181">
    <property type="term" value="F:small ribosomal subunit rRNA binding"/>
    <property type="evidence" value="ECO:0007669"/>
    <property type="project" value="TreeGrafter"/>
</dbReference>
<dbReference type="GO" id="GO:0003735">
    <property type="term" value="F:structural constituent of ribosome"/>
    <property type="evidence" value="ECO:0007669"/>
    <property type="project" value="InterPro"/>
</dbReference>
<dbReference type="GO" id="GO:0006412">
    <property type="term" value="P:translation"/>
    <property type="evidence" value="ECO:0007669"/>
    <property type="project" value="UniProtKB-UniRule"/>
</dbReference>
<dbReference type="CDD" id="cd00473">
    <property type="entry name" value="bS6"/>
    <property type="match status" value="1"/>
</dbReference>
<dbReference type="Gene3D" id="3.30.70.60">
    <property type="match status" value="1"/>
</dbReference>
<dbReference type="HAMAP" id="MF_00360">
    <property type="entry name" value="Ribosomal_bS6"/>
    <property type="match status" value="1"/>
</dbReference>
<dbReference type="InterPro" id="IPR000529">
    <property type="entry name" value="Ribosomal_bS6"/>
</dbReference>
<dbReference type="InterPro" id="IPR035980">
    <property type="entry name" value="Ribosomal_bS6_sf"/>
</dbReference>
<dbReference type="InterPro" id="IPR020814">
    <property type="entry name" value="Ribosomal_S6_plastid/chlpt"/>
</dbReference>
<dbReference type="InterPro" id="IPR014717">
    <property type="entry name" value="Transl_elong_EF1B/ribsomal_bS6"/>
</dbReference>
<dbReference type="NCBIfam" id="TIGR00166">
    <property type="entry name" value="S6"/>
    <property type="match status" value="1"/>
</dbReference>
<dbReference type="PANTHER" id="PTHR21011">
    <property type="entry name" value="MITOCHONDRIAL 28S RIBOSOMAL PROTEIN S6"/>
    <property type="match status" value="1"/>
</dbReference>
<dbReference type="PANTHER" id="PTHR21011:SF1">
    <property type="entry name" value="SMALL RIBOSOMAL SUBUNIT PROTEIN BS6M"/>
    <property type="match status" value="1"/>
</dbReference>
<dbReference type="Pfam" id="PF01250">
    <property type="entry name" value="Ribosomal_S6"/>
    <property type="match status" value="1"/>
</dbReference>
<dbReference type="SUPFAM" id="SSF54995">
    <property type="entry name" value="Ribosomal protein S6"/>
    <property type="match status" value="1"/>
</dbReference>
<organism>
    <name type="scientific">Rhodopseudomonas palustris (strain ATCC BAA-98 / CGA009)</name>
    <dbReference type="NCBI Taxonomy" id="258594"/>
    <lineage>
        <taxon>Bacteria</taxon>
        <taxon>Pseudomonadati</taxon>
        <taxon>Pseudomonadota</taxon>
        <taxon>Alphaproteobacteria</taxon>
        <taxon>Hyphomicrobiales</taxon>
        <taxon>Nitrobacteraceae</taxon>
        <taxon>Rhodopseudomonas</taxon>
    </lineage>
</organism>
<feature type="chain" id="PRO_0000176827" description="Small ribosomal subunit protein bS6">
    <location>
        <begin position="1"/>
        <end position="158"/>
    </location>
</feature>
<feature type="region of interest" description="Disordered" evidence="2">
    <location>
        <begin position="92"/>
        <end position="158"/>
    </location>
</feature>
<feature type="compositionally biased region" description="Basic and acidic residues" evidence="2">
    <location>
        <begin position="92"/>
        <end position="149"/>
    </location>
</feature>
<protein>
    <recommendedName>
        <fullName evidence="1">Small ribosomal subunit protein bS6</fullName>
    </recommendedName>
    <alternativeName>
        <fullName evidence="3">30S ribosomal protein S6</fullName>
    </alternativeName>
    <alternativeName>
        <fullName>RRP-S6</fullName>
    </alternativeName>
</protein>
<proteinExistence type="evidence at protein level"/>